<proteinExistence type="inferred from homology"/>
<evidence type="ECO:0000255" key="1">
    <source>
        <dbReference type="HAMAP-Rule" id="MF_01445"/>
    </source>
</evidence>
<name>TSAD_SHESR</name>
<protein>
    <recommendedName>
        <fullName evidence="1">tRNA N6-adenosine threonylcarbamoyltransferase</fullName>
        <ecNumber evidence="1">2.3.1.234</ecNumber>
    </recommendedName>
    <alternativeName>
        <fullName evidence="1">N6-L-threonylcarbamoyladenine synthase</fullName>
        <shortName evidence="1">t(6)A synthase</shortName>
    </alternativeName>
    <alternativeName>
        <fullName evidence="1">t(6)A37 threonylcarbamoyladenosine biosynthesis protein TsaD</fullName>
    </alternativeName>
    <alternativeName>
        <fullName evidence="1">tRNA threonylcarbamoyladenosine biosynthesis protein TsaD</fullName>
    </alternativeName>
</protein>
<organism>
    <name type="scientific">Shewanella sp. (strain MR-7)</name>
    <dbReference type="NCBI Taxonomy" id="60481"/>
    <lineage>
        <taxon>Bacteria</taxon>
        <taxon>Pseudomonadati</taxon>
        <taxon>Pseudomonadota</taxon>
        <taxon>Gammaproteobacteria</taxon>
        <taxon>Alteromonadales</taxon>
        <taxon>Shewanellaceae</taxon>
        <taxon>Shewanella</taxon>
    </lineage>
</organism>
<sequence length="338" mass="36190">MRVLGIETSCDETGIAVYDDKLGLLSHALYSQVKLHADYGGVVPELASRDHVRKIVPLIRQALKNANTEIADLDGIAYTKGPGLIGALLVGACVGRSLAFAWNKPAIGVHHMEGHLLAPMLEDDAPEFPFVALLVSGGHSMLVKVDGIGLYEVLGESVDDAAGEAFDKTAKLMGLDYPGGPRLAKLAAKGEPAGYQFPRPMTDRPGLDFSFSGLKTFTANTIAAEPDDEQTRANIARAFEEAVVDTLAIKCRRALKQTGYNRLVIAGGVSANTRLRETLAEMMTSIGGRVYYPRGEFCTDNGAMIAFAGLQRLKAGQQEDLAVKGQPRWPLDTLPPVA</sequence>
<dbReference type="EC" id="2.3.1.234" evidence="1"/>
<dbReference type="EMBL" id="CP000444">
    <property type="protein sequence ID" value="ABI43970.1"/>
    <property type="molecule type" value="Genomic_DNA"/>
</dbReference>
<dbReference type="SMR" id="Q0HSD5"/>
<dbReference type="KEGG" id="shm:Shewmr7_2986"/>
<dbReference type="HOGENOM" id="CLU_023208_0_0_6"/>
<dbReference type="GO" id="GO:0005737">
    <property type="term" value="C:cytoplasm"/>
    <property type="evidence" value="ECO:0007669"/>
    <property type="project" value="UniProtKB-SubCell"/>
</dbReference>
<dbReference type="GO" id="GO:0005506">
    <property type="term" value="F:iron ion binding"/>
    <property type="evidence" value="ECO:0007669"/>
    <property type="project" value="UniProtKB-UniRule"/>
</dbReference>
<dbReference type="GO" id="GO:0061711">
    <property type="term" value="F:N(6)-L-threonylcarbamoyladenine synthase activity"/>
    <property type="evidence" value="ECO:0007669"/>
    <property type="project" value="UniProtKB-EC"/>
</dbReference>
<dbReference type="GO" id="GO:0002949">
    <property type="term" value="P:tRNA threonylcarbamoyladenosine modification"/>
    <property type="evidence" value="ECO:0007669"/>
    <property type="project" value="UniProtKB-UniRule"/>
</dbReference>
<dbReference type="CDD" id="cd24133">
    <property type="entry name" value="ASKHA_NBD_TsaD_bac"/>
    <property type="match status" value="1"/>
</dbReference>
<dbReference type="FunFam" id="3.30.420.40:FF:000031">
    <property type="entry name" value="tRNA N6-adenosine threonylcarbamoyltransferase"/>
    <property type="match status" value="1"/>
</dbReference>
<dbReference type="Gene3D" id="3.30.420.40">
    <property type="match status" value="2"/>
</dbReference>
<dbReference type="HAMAP" id="MF_01445">
    <property type="entry name" value="TsaD"/>
    <property type="match status" value="1"/>
</dbReference>
<dbReference type="InterPro" id="IPR043129">
    <property type="entry name" value="ATPase_NBD"/>
</dbReference>
<dbReference type="InterPro" id="IPR000905">
    <property type="entry name" value="Gcp-like_dom"/>
</dbReference>
<dbReference type="InterPro" id="IPR017861">
    <property type="entry name" value="KAE1/TsaD"/>
</dbReference>
<dbReference type="InterPro" id="IPR017860">
    <property type="entry name" value="Peptidase_M22_CS"/>
</dbReference>
<dbReference type="InterPro" id="IPR022450">
    <property type="entry name" value="TsaD"/>
</dbReference>
<dbReference type="NCBIfam" id="TIGR00329">
    <property type="entry name" value="gcp_kae1"/>
    <property type="match status" value="1"/>
</dbReference>
<dbReference type="NCBIfam" id="TIGR03723">
    <property type="entry name" value="T6A_TsaD_YgjD"/>
    <property type="match status" value="1"/>
</dbReference>
<dbReference type="PANTHER" id="PTHR11735">
    <property type="entry name" value="TRNA N6-ADENOSINE THREONYLCARBAMOYLTRANSFERASE"/>
    <property type="match status" value="1"/>
</dbReference>
<dbReference type="PANTHER" id="PTHR11735:SF6">
    <property type="entry name" value="TRNA N6-ADENOSINE THREONYLCARBAMOYLTRANSFERASE, MITOCHONDRIAL"/>
    <property type="match status" value="1"/>
</dbReference>
<dbReference type="Pfam" id="PF00814">
    <property type="entry name" value="TsaD"/>
    <property type="match status" value="1"/>
</dbReference>
<dbReference type="PRINTS" id="PR00789">
    <property type="entry name" value="OSIALOPTASE"/>
</dbReference>
<dbReference type="SUPFAM" id="SSF53067">
    <property type="entry name" value="Actin-like ATPase domain"/>
    <property type="match status" value="2"/>
</dbReference>
<dbReference type="PROSITE" id="PS01016">
    <property type="entry name" value="GLYCOPROTEASE"/>
    <property type="match status" value="1"/>
</dbReference>
<accession>Q0HSD5</accession>
<comment type="function">
    <text evidence="1">Required for the formation of a threonylcarbamoyl group on adenosine at position 37 (t(6)A37) in tRNAs that read codons beginning with adenine. Is involved in the transfer of the threonylcarbamoyl moiety of threonylcarbamoyl-AMP (TC-AMP) to the N6 group of A37, together with TsaE and TsaB. TsaD likely plays a direct catalytic role in this reaction.</text>
</comment>
<comment type="catalytic activity">
    <reaction evidence="1">
        <text>L-threonylcarbamoyladenylate + adenosine(37) in tRNA = N(6)-L-threonylcarbamoyladenosine(37) in tRNA + AMP + H(+)</text>
        <dbReference type="Rhea" id="RHEA:37059"/>
        <dbReference type="Rhea" id="RHEA-COMP:10162"/>
        <dbReference type="Rhea" id="RHEA-COMP:10163"/>
        <dbReference type="ChEBI" id="CHEBI:15378"/>
        <dbReference type="ChEBI" id="CHEBI:73682"/>
        <dbReference type="ChEBI" id="CHEBI:74411"/>
        <dbReference type="ChEBI" id="CHEBI:74418"/>
        <dbReference type="ChEBI" id="CHEBI:456215"/>
        <dbReference type="EC" id="2.3.1.234"/>
    </reaction>
</comment>
<comment type="cofactor">
    <cofactor evidence="1">
        <name>Fe(2+)</name>
        <dbReference type="ChEBI" id="CHEBI:29033"/>
    </cofactor>
    <text evidence="1">Binds 1 Fe(2+) ion per subunit.</text>
</comment>
<comment type="subcellular location">
    <subcellularLocation>
        <location evidence="1">Cytoplasm</location>
    </subcellularLocation>
</comment>
<comment type="similarity">
    <text evidence="1">Belongs to the KAE1 / TsaD family.</text>
</comment>
<feature type="chain" id="PRO_0000303537" description="tRNA N6-adenosine threonylcarbamoyltransferase">
    <location>
        <begin position="1"/>
        <end position="338"/>
    </location>
</feature>
<feature type="binding site" evidence="1">
    <location>
        <position position="111"/>
    </location>
    <ligand>
        <name>Fe cation</name>
        <dbReference type="ChEBI" id="CHEBI:24875"/>
    </ligand>
</feature>
<feature type="binding site" evidence="1">
    <location>
        <position position="115"/>
    </location>
    <ligand>
        <name>Fe cation</name>
        <dbReference type="ChEBI" id="CHEBI:24875"/>
    </ligand>
</feature>
<feature type="binding site" evidence="1">
    <location>
        <begin position="134"/>
        <end position="138"/>
    </location>
    <ligand>
        <name>substrate</name>
    </ligand>
</feature>
<feature type="binding site" evidence="1">
    <location>
        <position position="167"/>
    </location>
    <ligand>
        <name>substrate</name>
    </ligand>
</feature>
<feature type="binding site" evidence="1">
    <location>
        <position position="180"/>
    </location>
    <ligand>
        <name>substrate</name>
    </ligand>
</feature>
<feature type="binding site" evidence="1">
    <location>
        <position position="272"/>
    </location>
    <ligand>
        <name>substrate</name>
    </ligand>
</feature>
<feature type="binding site" evidence="1">
    <location>
        <position position="300"/>
    </location>
    <ligand>
        <name>Fe cation</name>
        <dbReference type="ChEBI" id="CHEBI:24875"/>
    </ligand>
</feature>
<reference key="1">
    <citation type="submission" date="2006-08" db="EMBL/GenBank/DDBJ databases">
        <title>Complete sequence of chromosome 1 of Shewanella sp. MR-7.</title>
        <authorList>
            <person name="Copeland A."/>
            <person name="Lucas S."/>
            <person name="Lapidus A."/>
            <person name="Barry K."/>
            <person name="Detter J.C."/>
            <person name="Glavina del Rio T."/>
            <person name="Hammon N."/>
            <person name="Israni S."/>
            <person name="Dalin E."/>
            <person name="Tice H."/>
            <person name="Pitluck S."/>
            <person name="Kiss H."/>
            <person name="Brettin T."/>
            <person name="Bruce D."/>
            <person name="Han C."/>
            <person name="Tapia R."/>
            <person name="Gilna P."/>
            <person name="Schmutz J."/>
            <person name="Larimer F."/>
            <person name="Land M."/>
            <person name="Hauser L."/>
            <person name="Kyrpides N."/>
            <person name="Mikhailova N."/>
            <person name="Nealson K."/>
            <person name="Konstantinidis K."/>
            <person name="Klappenbach J."/>
            <person name="Tiedje J."/>
            <person name="Richardson P."/>
        </authorList>
    </citation>
    <scope>NUCLEOTIDE SEQUENCE [LARGE SCALE GENOMIC DNA]</scope>
    <source>
        <strain>MR-7</strain>
    </source>
</reference>
<gene>
    <name evidence="1" type="primary">tsaD</name>
    <name type="synonym">gcp</name>
    <name type="ordered locus">Shewmr7_2986</name>
</gene>
<keyword id="KW-0012">Acyltransferase</keyword>
<keyword id="KW-0963">Cytoplasm</keyword>
<keyword id="KW-0408">Iron</keyword>
<keyword id="KW-0479">Metal-binding</keyword>
<keyword id="KW-0808">Transferase</keyword>
<keyword id="KW-0819">tRNA processing</keyword>